<gene>
    <name evidence="1" type="primary">mukF</name>
    <name type="ordered locus">SF0918</name>
    <name type="ordered locus">S0982</name>
</gene>
<protein>
    <recommendedName>
        <fullName evidence="1">Chromosome partition protein MukF</fullName>
    </recommendedName>
</protein>
<keyword id="KW-0106">Calcium</keyword>
<keyword id="KW-0131">Cell cycle</keyword>
<keyword id="KW-0132">Cell division</keyword>
<keyword id="KW-0159">Chromosome partition</keyword>
<keyword id="KW-0963">Cytoplasm</keyword>
<keyword id="KW-0226">DNA condensation</keyword>
<keyword id="KW-1185">Reference proteome</keyword>
<reference key="1">
    <citation type="journal article" date="2002" name="Nucleic Acids Res.">
        <title>Genome sequence of Shigella flexneri 2a: insights into pathogenicity through comparison with genomes of Escherichia coli K12 and O157.</title>
        <authorList>
            <person name="Jin Q."/>
            <person name="Yuan Z."/>
            <person name="Xu J."/>
            <person name="Wang Y."/>
            <person name="Shen Y."/>
            <person name="Lu W."/>
            <person name="Wang J."/>
            <person name="Liu H."/>
            <person name="Yang J."/>
            <person name="Yang F."/>
            <person name="Zhang X."/>
            <person name="Zhang J."/>
            <person name="Yang G."/>
            <person name="Wu H."/>
            <person name="Qu D."/>
            <person name="Dong J."/>
            <person name="Sun L."/>
            <person name="Xue Y."/>
            <person name="Zhao A."/>
            <person name="Gao Y."/>
            <person name="Zhu J."/>
            <person name="Kan B."/>
            <person name="Ding K."/>
            <person name="Chen S."/>
            <person name="Cheng H."/>
            <person name="Yao Z."/>
            <person name="He B."/>
            <person name="Chen R."/>
            <person name="Ma D."/>
            <person name="Qiang B."/>
            <person name="Wen Y."/>
            <person name="Hou Y."/>
            <person name="Yu J."/>
        </authorList>
    </citation>
    <scope>NUCLEOTIDE SEQUENCE [LARGE SCALE GENOMIC DNA]</scope>
    <source>
        <strain>301 / Serotype 2a</strain>
    </source>
</reference>
<reference key="2">
    <citation type="journal article" date="2003" name="Infect. Immun.">
        <title>Complete genome sequence and comparative genomics of Shigella flexneri serotype 2a strain 2457T.</title>
        <authorList>
            <person name="Wei J."/>
            <person name="Goldberg M.B."/>
            <person name="Burland V."/>
            <person name="Venkatesan M.M."/>
            <person name="Deng W."/>
            <person name="Fournier G."/>
            <person name="Mayhew G.F."/>
            <person name="Plunkett G. III"/>
            <person name="Rose D.J."/>
            <person name="Darling A."/>
            <person name="Mau B."/>
            <person name="Perna N.T."/>
            <person name="Payne S.M."/>
            <person name="Runyen-Janecky L.J."/>
            <person name="Zhou S."/>
            <person name="Schwartz D.C."/>
            <person name="Blattner F.R."/>
        </authorList>
    </citation>
    <scope>NUCLEOTIDE SEQUENCE [LARGE SCALE GENOMIC DNA]</scope>
    <source>
        <strain>ATCC 700930 / 2457T / Serotype 2a</strain>
    </source>
</reference>
<dbReference type="EMBL" id="AE005674">
    <property type="protein sequence ID" value="AAN42547.1"/>
    <property type="molecule type" value="Genomic_DNA"/>
</dbReference>
<dbReference type="EMBL" id="AE014073">
    <property type="protein sequence ID" value="AAP16433.1"/>
    <property type="molecule type" value="Genomic_DNA"/>
</dbReference>
<dbReference type="RefSeq" id="NP_706840.1">
    <property type="nucleotide sequence ID" value="NC_004337.2"/>
</dbReference>
<dbReference type="RefSeq" id="WP_001288850.1">
    <property type="nucleotide sequence ID" value="NZ_WPGW01000072.1"/>
</dbReference>
<dbReference type="SMR" id="P60294"/>
<dbReference type="STRING" id="198214.SF0918"/>
<dbReference type="PaxDb" id="198214-SF0918"/>
<dbReference type="GeneID" id="1023853"/>
<dbReference type="GeneID" id="93776493"/>
<dbReference type="KEGG" id="sfl:SF0918"/>
<dbReference type="KEGG" id="sfx:S0982"/>
<dbReference type="PATRIC" id="fig|198214.7.peg.1069"/>
<dbReference type="HOGENOM" id="CLU_049853_0_0_6"/>
<dbReference type="Proteomes" id="UP000001006">
    <property type="component" value="Chromosome"/>
</dbReference>
<dbReference type="Proteomes" id="UP000002673">
    <property type="component" value="Chromosome"/>
</dbReference>
<dbReference type="GO" id="GO:0005737">
    <property type="term" value="C:cytoplasm"/>
    <property type="evidence" value="ECO:0007669"/>
    <property type="project" value="UniProtKB-UniRule"/>
</dbReference>
<dbReference type="GO" id="GO:0009295">
    <property type="term" value="C:nucleoid"/>
    <property type="evidence" value="ECO:0007669"/>
    <property type="project" value="UniProtKB-SubCell"/>
</dbReference>
<dbReference type="GO" id="GO:0005509">
    <property type="term" value="F:calcium ion binding"/>
    <property type="evidence" value="ECO:0007669"/>
    <property type="project" value="UniProtKB-UniRule"/>
</dbReference>
<dbReference type="GO" id="GO:0051301">
    <property type="term" value="P:cell division"/>
    <property type="evidence" value="ECO:0007669"/>
    <property type="project" value="UniProtKB-KW"/>
</dbReference>
<dbReference type="GO" id="GO:0030261">
    <property type="term" value="P:chromosome condensation"/>
    <property type="evidence" value="ECO:0007669"/>
    <property type="project" value="UniProtKB-KW"/>
</dbReference>
<dbReference type="GO" id="GO:0007059">
    <property type="term" value="P:chromosome segregation"/>
    <property type="evidence" value="ECO:0007669"/>
    <property type="project" value="UniProtKB-UniRule"/>
</dbReference>
<dbReference type="GO" id="GO:0006260">
    <property type="term" value="P:DNA replication"/>
    <property type="evidence" value="ECO:0007669"/>
    <property type="project" value="UniProtKB-UniRule"/>
</dbReference>
<dbReference type="CDD" id="cd16337">
    <property type="entry name" value="MukF_C"/>
    <property type="match status" value="1"/>
</dbReference>
<dbReference type="CDD" id="cd16335">
    <property type="entry name" value="MukF_N"/>
    <property type="match status" value="1"/>
</dbReference>
<dbReference type="Gene3D" id="1.20.58.590">
    <property type="entry name" value="Chromosome partition protein MukF, middle domain"/>
    <property type="match status" value="1"/>
</dbReference>
<dbReference type="Gene3D" id="1.10.225.40">
    <property type="entry name" value="MukF, C-terminal domain"/>
    <property type="match status" value="1"/>
</dbReference>
<dbReference type="Gene3D" id="1.10.10.10">
    <property type="entry name" value="Winged helix-like DNA-binding domain superfamily/Winged helix DNA-binding domain"/>
    <property type="match status" value="1"/>
</dbReference>
<dbReference type="HAMAP" id="MF_01803">
    <property type="entry name" value="MukF"/>
    <property type="match status" value="1"/>
</dbReference>
<dbReference type="InterPro" id="IPR005582">
    <property type="entry name" value="Chromosome_partition_MukF"/>
</dbReference>
<dbReference type="InterPro" id="IPR033441">
    <property type="entry name" value="MukF_C"/>
</dbReference>
<dbReference type="InterPro" id="IPR038198">
    <property type="entry name" value="MukF_C_sf"/>
</dbReference>
<dbReference type="InterPro" id="IPR033440">
    <property type="entry name" value="MukF_M"/>
</dbReference>
<dbReference type="InterPro" id="IPR036141">
    <property type="entry name" value="MukF_M_sp"/>
</dbReference>
<dbReference type="InterPro" id="IPR033439">
    <property type="entry name" value="MukF_WHTH"/>
</dbReference>
<dbReference type="InterPro" id="IPR036388">
    <property type="entry name" value="WH-like_DNA-bd_sf"/>
</dbReference>
<dbReference type="InterPro" id="IPR036390">
    <property type="entry name" value="WH_DNA-bd_sf"/>
</dbReference>
<dbReference type="NCBIfam" id="NF003615">
    <property type="entry name" value="PRK05260.1"/>
    <property type="match status" value="1"/>
</dbReference>
<dbReference type="Pfam" id="PF03882">
    <property type="entry name" value="KicB"/>
    <property type="match status" value="1"/>
</dbReference>
<dbReference type="Pfam" id="PF17193">
    <property type="entry name" value="MukF_C"/>
    <property type="match status" value="1"/>
</dbReference>
<dbReference type="Pfam" id="PF17192">
    <property type="entry name" value="MukF_M"/>
    <property type="match status" value="1"/>
</dbReference>
<dbReference type="PIRSF" id="PIRSF018282">
    <property type="entry name" value="MukF"/>
    <property type="match status" value="1"/>
</dbReference>
<dbReference type="SUPFAM" id="SSF140570">
    <property type="entry name" value="MukF C-terminal domain-like"/>
    <property type="match status" value="1"/>
</dbReference>
<dbReference type="SUPFAM" id="SSF46785">
    <property type="entry name" value="Winged helix' DNA-binding domain"/>
    <property type="match status" value="1"/>
</dbReference>
<comment type="function">
    <text evidence="1">Involved in chromosome condensation, segregation and cell cycle progression. May participate in facilitating chromosome segregation by condensation DNA from both sides of a centrally located replisome during cell division. Not required for mini-F plasmid partitioning. Probably acts via its interaction with MukB and MukE. Overexpression results in anucleate cells. It has a calcium binding activity.</text>
</comment>
<comment type="subunit">
    <text evidence="1">Interacts, and probably forms a ternary complex, with MukE and MukB via its C-terminal region. The complex formation is stimulated by calcium or magnesium. It is required for an interaction between MukE and MukB.</text>
</comment>
<comment type="subcellular location">
    <subcellularLocation>
        <location evidence="1">Cytoplasm</location>
        <location evidence="1">Nucleoid</location>
    </subcellularLocation>
    <text evidence="1">Restricted to the nucleoid region.</text>
</comment>
<comment type="similarity">
    <text evidence="1">Belongs to the MukF family.</text>
</comment>
<name>MUKF_SHIFL</name>
<organism>
    <name type="scientific">Shigella flexneri</name>
    <dbReference type="NCBI Taxonomy" id="623"/>
    <lineage>
        <taxon>Bacteria</taxon>
        <taxon>Pseudomonadati</taxon>
        <taxon>Pseudomonadota</taxon>
        <taxon>Gammaproteobacteria</taxon>
        <taxon>Enterobacterales</taxon>
        <taxon>Enterobacteriaceae</taxon>
        <taxon>Shigella</taxon>
    </lineage>
</organism>
<evidence type="ECO:0000255" key="1">
    <source>
        <dbReference type="HAMAP-Rule" id="MF_01803"/>
    </source>
</evidence>
<accession>P60294</accession>
<accession>P36567</accession>
<feature type="chain" id="PRO_0000211611" description="Chromosome partition protein MukF">
    <location>
        <begin position="1"/>
        <end position="440"/>
    </location>
</feature>
<feature type="region of interest" description="Leucine-zipper">
    <location>
        <begin position="208"/>
        <end position="236"/>
    </location>
</feature>
<sequence>MSEFSQTVPELVAWARKNDFSISLPVDRLSFLLAVATLNGERLDGEMSEGELVDAFRHVSDAFEQTSETIGVRANNAINDMVRQRLLNRFTSEQAEGNAIYRLTPLGIGITDYYIRQREFSTLRLSMQLSIVAGELKRAADAAEEGGDEFHWHRNVYAPLKYSVAEIFDSIDLTQRLMDEQQQQVKDDIAQLLNKDWRAAISSCELLLSETSGTLRELQDTLEAAGDKLQANLLRIQDATMTHDDLHFVDRLVFDLQSKLDRIISWGQQSIDLWIGYDRHVHKFIRTAIDMDKNRVFAQRLRQSVQTYFDEPWALTYANADRLLDMRDEEMALRDEEVTGELPEDLEYEEFNEIREQLAAIIEEQLAVYKTRQVPLDLGLVVREYLSQYPRARHFDVARIVIDQAVRLGVAQADFTGLPAKWQPINDYGAKVQAHVIDKY</sequence>
<proteinExistence type="inferred from homology"/>